<sequence length="96" mass="11114">MRDPRDIIKRPVITERSMEMMAEKKYTFDVDVKSNKTEVKDALEAIFGVKVEKVNIMNYKPKAKRVGRHAGFTSRRRKAIVKLTADSKEIEIFQGV</sequence>
<proteinExistence type="inferred from homology"/>
<comment type="function">
    <text evidence="1">One of the early assembly proteins it binds 23S rRNA. One of the proteins that surrounds the polypeptide exit tunnel on the outside of the ribosome. Forms the main docking site for trigger factor binding to the ribosome.</text>
</comment>
<comment type="subunit">
    <text evidence="1">Part of the 50S ribosomal subunit. Contacts protein L29, and trigger factor when it is bound to the ribosome.</text>
</comment>
<comment type="similarity">
    <text evidence="1">Belongs to the universal ribosomal protein uL23 family.</text>
</comment>
<organism>
    <name type="scientific">Bacillus anthracis (strain A0248)</name>
    <dbReference type="NCBI Taxonomy" id="592021"/>
    <lineage>
        <taxon>Bacteria</taxon>
        <taxon>Bacillati</taxon>
        <taxon>Bacillota</taxon>
        <taxon>Bacilli</taxon>
        <taxon>Bacillales</taxon>
        <taxon>Bacillaceae</taxon>
        <taxon>Bacillus</taxon>
        <taxon>Bacillus cereus group</taxon>
    </lineage>
</organism>
<accession>C3P9Q7</accession>
<gene>
    <name evidence="1" type="primary">rplW</name>
    <name type="ordered locus">BAA_0128</name>
</gene>
<evidence type="ECO:0000255" key="1">
    <source>
        <dbReference type="HAMAP-Rule" id="MF_01369"/>
    </source>
</evidence>
<evidence type="ECO:0000305" key="2"/>
<feature type="chain" id="PRO_1000184062" description="Large ribosomal subunit protein uL23">
    <location>
        <begin position="1"/>
        <end position="96"/>
    </location>
</feature>
<dbReference type="EMBL" id="CP001598">
    <property type="protein sequence ID" value="ACQ48455.1"/>
    <property type="molecule type" value="Genomic_DNA"/>
</dbReference>
<dbReference type="RefSeq" id="WP_001205558.1">
    <property type="nucleotide sequence ID" value="NC_012659.1"/>
</dbReference>
<dbReference type="SMR" id="C3P9Q7"/>
<dbReference type="GeneID" id="93010941"/>
<dbReference type="KEGG" id="bai:BAA_0128"/>
<dbReference type="HOGENOM" id="CLU_037562_3_2_9"/>
<dbReference type="GO" id="GO:1990904">
    <property type="term" value="C:ribonucleoprotein complex"/>
    <property type="evidence" value="ECO:0007669"/>
    <property type="project" value="UniProtKB-KW"/>
</dbReference>
<dbReference type="GO" id="GO:0005840">
    <property type="term" value="C:ribosome"/>
    <property type="evidence" value="ECO:0007669"/>
    <property type="project" value="UniProtKB-KW"/>
</dbReference>
<dbReference type="GO" id="GO:0019843">
    <property type="term" value="F:rRNA binding"/>
    <property type="evidence" value="ECO:0007669"/>
    <property type="project" value="UniProtKB-UniRule"/>
</dbReference>
<dbReference type="GO" id="GO:0003735">
    <property type="term" value="F:structural constituent of ribosome"/>
    <property type="evidence" value="ECO:0007669"/>
    <property type="project" value="InterPro"/>
</dbReference>
<dbReference type="GO" id="GO:0006412">
    <property type="term" value="P:translation"/>
    <property type="evidence" value="ECO:0007669"/>
    <property type="project" value="UniProtKB-UniRule"/>
</dbReference>
<dbReference type="FunFam" id="3.30.70.330:FF:000001">
    <property type="entry name" value="50S ribosomal protein L23"/>
    <property type="match status" value="1"/>
</dbReference>
<dbReference type="Gene3D" id="3.30.70.330">
    <property type="match status" value="1"/>
</dbReference>
<dbReference type="HAMAP" id="MF_01369_B">
    <property type="entry name" value="Ribosomal_uL23_B"/>
    <property type="match status" value="1"/>
</dbReference>
<dbReference type="InterPro" id="IPR012677">
    <property type="entry name" value="Nucleotide-bd_a/b_plait_sf"/>
</dbReference>
<dbReference type="InterPro" id="IPR013025">
    <property type="entry name" value="Ribosomal_uL23-like"/>
</dbReference>
<dbReference type="InterPro" id="IPR012678">
    <property type="entry name" value="Ribosomal_uL23/eL15/eS24_sf"/>
</dbReference>
<dbReference type="InterPro" id="IPR001014">
    <property type="entry name" value="Ribosomal_uL23_CS"/>
</dbReference>
<dbReference type="NCBIfam" id="NF004363">
    <property type="entry name" value="PRK05738.2-4"/>
    <property type="match status" value="1"/>
</dbReference>
<dbReference type="PANTHER" id="PTHR11620">
    <property type="entry name" value="60S RIBOSOMAL PROTEIN L23A"/>
    <property type="match status" value="1"/>
</dbReference>
<dbReference type="Pfam" id="PF00276">
    <property type="entry name" value="Ribosomal_L23"/>
    <property type="match status" value="1"/>
</dbReference>
<dbReference type="SUPFAM" id="SSF54189">
    <property type="entry name" value="Ribosomal proteins S24e, L23 and L15e"/>
    <property type="match status" value="1"/>
</dbReference>
<dbReference type="PROSITE" id="PS00050">
    <property type="entry name" value="RIBOSOMAL_L23"/>
    <property type="match status" value="1"/>
</dbReference>
<keyword id="KW-0687">Ribonucleoprotein</keyword>
<keyword id="KW-0689">Ribosomal protein</keyword>
<keyword id="KW-0694">RNA-binding</keyword>
<keyword id="KW-0699">rRNA-binding</keyword>
<protein>
    <recommendedName>
        <fullName evidence="1">Large ribosomal subunit protein uL23</fullName>
    </recommendedName>
    <alternativeName>
        <fullName evidence="2">50S ribosomal protein L23</fullName>
    </alternativeName>
</protein>
<reference key="1">
    <citation type="submission" date="2009-04" db="EMBL/GenBank/DDBJ databases">
        <title>Genome sequence of Bacillus anthracis A0248.</title>
        <authorList>
            <person name="Dodson R.J."/>
            <person name="Munk A.C."/>
            <person name="Bruce D."/>
            <person name="Detter C."/>
            <person name="Tapia R."/>
            <person name="Sutton G."/>
            <person name="Sims D."/>
            <person name="Brettin T."/>
        </authorList>
    </citation>
    <scope>NUCLEOTIDE SEQUENCE [LARGE SCALE GENOMIC DNA]</scope>
    <source>
        <strain>A0248</strain>
    </source>
</reference>
<name>RL23_BACAA</name>